<dbReference type="EMBL" id="AM920428">
    <property type="protein sequence ID" value="CAP91841.1"/>
    <property type="molecule type" value="Genomic_DNA"/>
</dbReference>
<dbReference type="RefSeq" id="XP_002559201.1">
    <property type="nucleotide sequence ID" value="XM_002559155.1"/>
</dbReference>
<dbReference type="SMR" id="B6H460"/>
<dbReference type="STRING" id="500485.B6H460"/>
<dbReference type="GeneID" id="8309933"/>
<dbReference type="KEGG" id="pcs:N7525_003398"/>
<dbReference type="VEuPathDB" id="FungiDB:PCH_Pc13g07720"/>
<dbReference type="eggNOG" id="KOG0465">
    <property type="taxonomic scope" value="Eukaryota"/>
</dbReference>
<dbReference type="HOGENOM" id="CLU_002794_4_1_1"/>
<dbReference type="OMA" id="GQFAKVQ"/>
<dbReference type="OrthoDB" id="198619at2759"/>
<dbReference type="BioCyc" id="PCHR:PC13G07720-MONOMER"/>
<dbReference type="UniPathway" id="UPA00345"/>
<dbReference type="Proteomes" id="UP000000724">
    <property type="component" value="Contig Pc00c13"/>
</dbReference>
<dbReference type="GO" id="GO:0005739">
    <property type="term" value="C:mitochondrion"/>
    <property type="evidence" value="ECO:0007669"/>
    <property type="project" value="UniProtKB-SubCell"/>
</dbReference>
<dbReference type="GO" id="GO:0005525">
    <property type="term" value="F:GTP binding"/>
    <property type="evidence" value="ECO:0007669"/>
    <property type="project" value="UniProtKB-UniRule"/>
</dbReference>
<dbReference type="GO" id="GO:0003924">
    <property type="term" value="F:GTPase activity"/>
    <property type="evidence" value="ECO:0007669"/>
    <property type="project" value="UniProtKB-UniRule"/>
</dbReference>
<dbReference type="GO" id="GO:0003746">
    <property type="term" value="F:translation elongation factor activity"/>
    <property type="evidence" value="ECO:0007669"/>
    <property type="project" value="UniProtKB-UniRule"/>
</dbReference>
<dbReference type="GO" id="GO:0070125">
    <property type="term" value="P:mitochondrial translational elongation"/>
    <property type="evidence" value="ECO:0007669"/>
    <property type="project" value="UniProtKB-UniRule"/>
</dbReference>
<dbReference type="CDD" id="cd01886">
    <property type="entry name" value="EF-G"/>
    <property type="match status" value="1"/>
</dbReference>
<dbReference type="CDD" id="cd16262">
    <property type="entry name" value="EFG_III"/>
    <property type="match status" value="1"/>
</dbReference>
<dbReference type="CDD" id="cd01434">
    <property type="entry name" value="EFG_mtEFG1_IV"/>
    <property type="match status" value="1"/>
</dbReference>
<dbReference type="CDD" id="cd04091">
    <property type="entry name" value="mtEFG1_II_like"/>
    <property type="match status" value="1"/>
</dbReference>
<dbReference type="FunFam" id="3.30.70.870:FF:000001">
    <property type="entry name" value="Elongation factor G"/>
    <property type="match status" value="1"/>
</dbReference>
<dbReference type="FunFam" id="2.40.30.10:FF:000022">
    <property type="entry name" value="Elongation factor G, mitochondrial"/>
    <property type="match status" value="1"/>
</dbReference>
<dbReference type="FunFam" id="3.30.70.240:FF:000015">
    <property type="entry name" value="Elongation factor G, mitochondrial"/>
    <property type="match status" value="1"/>
</dbReference>
<dbReference type="FunFam" id="3.40.50.300:FF:000558">
    <property type="entry name" value="Elongation factor G, mitochondrial"/>
    <property type="match status" value="1"/>
</dbReference>
<dbReference type="Gene3D" id="3.30.230.10">
    <property type="match status" value="1"/>
</dbReference>
<dbReference type="Gene3D" id="3.30.70.240">
    <property type="match status" value="1"/>
</dbReference>
<dbReference type="Gene3D" id="3.30.70.870">
    <property type="entry name" value="Elongation Factor G (Translational Gtpase), domain 3"/>
    <property type="match status" value="1"/>
</dbReference>
<dbReference type="Gene3D" id="3.40.50.300">
    <property type="entry name" value="P-loop containing nucleotide triphosphate hydrolases"/>
    <property type="match status" value="1"/>
</dbReference>
<dbReference type="Gene3D" id="2.40.30.10">
    <property type="entry name" value="Translation factors"/>
    <property type="match status" value="1"/>
</dbReference>
<dbReference type="HAMAP" id="MF_00054_B">
    <property type="entry name" value="EF_G_EF_2_B"/>
    <property type="match status" value="1"/>
</dbReference>
<dbReference type="InterPro" id="IPR041095">
    <property type="entry name" value="EFG_II"/>
</dbReference>
<dbReference type="InterPro" id="IPR009022">
    <property type="entry name" value="EFG_III"/>
</dbReference>
<dbReference type="InterPro" id="IPR035647">
    <property type="entry name" value="EFG_III/V"/>
</dbReference>
<dbReference type="InterPro" id="IPR047872">
    <property type="entry name" value="EFG_IV"/>
</dbReference>
<dbReference type="InterPro" id="IPR000640">
    <property type="entry name" value="EFG_V-like"/>
</dbReference>
<dbReference type="InterPro" id="IPR004161">
    <property type="entry name" value="EFTu-like_2"/>
</dbReference>
<dbReference type="InterPro" id="IPR031157">
    <property type="entry name" value="G_TR_CS"/>
</dbReference>
<dbReference type="InterPro" id="IPR027417">
    <property type="entry name" value="P-loop_NTPase"/>
</dbReference>
<dbReference type="InterPro" id="IPR020568">
    <property type="entry name" value="Ribosomal_Su5_D2-typ_SF"/>
</dbReference>
<dbReference type="InterPro" id="IPR014721">
    <property type="entry name" value="Ribsml_uS5_D2-typ_fold_subgr"/>
</dbReference>
<dbReference type="InterPro" id="IPR005225">
    <property type="entry name" value="Small_GTP-bd"/>
</dbReference>
<dbReference type="InterPro" id="IPR000795">
    <property type="entry name" value="T_Tr_GTP-bd_dom"/>
</dbReference>
<dbReference type="InterPro" id="IPR009000">
    <property type="entry name" value="Transl_B-barrel_sf"/>
</dbReference>
<dbReference type="InterPro" id="IPR004540">
    <property type="entry name" value="Transl_elong_EFG/EF2"/>
</dbReference>
<dbReference type="InterPro" id="IPR005517">
    <property type="entry name" value="Transl_elong_EFG/EF2_IV"/>
</dbReference>
<dbReference type="NCBIfam" id="TIGR00484">
    <property type="entry name" value="EF-G"/>
    <property type="match status" value="1"/>
</dbReference>
<dbReference type="NCBIfam" id="NF009381">
    <property type="entry name" value="PRK12740.1-5"/>
    <property type="match status" value="1"/>
</dbReference>
<dbReference type="NCBIfam" id="TIGR00231">
    <property type="entry name" value="small_GTP"/>
    <property type="match status" value="1"/>
</dbReference>
<dbReference type="PANTHER" id="PTHR43636">
    <property type="entry name" value="ELONGATION FACTOR G, MITOCHONDRIAL"/>
    <property type="match status" value="1"/>
</dbReference>
<dbReference type="PANTHER" id="PTHR43636:SF2">
    <property type="entry name" value="ELONGATION FACTOR G, MITOCHONDRIAL"/>
    <property type="match status" value="1"/>
</dbReference>
<dbReference type="Pfam" id="PF00679">
    <property type="entry name" value="EFG_C"/>
    <property type="match status" value="1"/>
</dbReference>
<dbReference type="Pfam" id="PF14492">
    <property type="entry name" value="EFG_III"/>
    <property type="match status" value="1"/>
</dbReference>
<dbReference type="Pfam" id="PF03764">
    <property type="entry name" value="EFG_IV"/>
    <property type="match status" value="1"/>
</dbReference>
<dbReference type="Pfam" id="PF00009">
    <property type="entry name" value="GTP_EFTU"/>
    <property type="match status" value="1"/>
</dbReference>
<dbReference type="Pfam" id="PF03144">
    <property type="entry name" value="GTP_EFTU_D2"/>
    <property type="match status" value="1"/>
</dbReference>
<dbReference type="PRINTS" id="PR00315">
    <property type="entry name" value="ELONGATNFCT"/>
</dbReference>
<dbReference type="SMART" id="SM00838">
    <property type="entry name" value="EFG_C"/>
    <property type="match status" value="1"/>
</dbReference>
<dbReference type="SMART" id="SM00889">
    <property type="entry name" value="EFG_IV"/>
    <property type="match status" value="1"/>
</dbReference>
<dbReference type="SUPFAM" id="SSF54980">
    <property type="entry name" value="EF-G C-terminal domain-like"/>
    <property type="match status" value="2"/>
</dbReference>
<dbReference type="SUPFAM" id="SSF52540">
    <property type="entry name" value="P-loop containing nucleoside triphosphate hydrolases"/>
    <property type="match status" value="1"/>
</dbReference>
<dbReference type="SUPFAM" id="SSF54211">
    <property type="entry name" value="Ribosomal protein S5 domain 2-like"/>
    <property type="match status" value="1"/>
</dbReference>
<dbReference type="SUPFAM" id="SSF50447">
    <property type="entry name" value="Translation proteins"/>
    <property type="match status" value="1"/>
</dbReference>
<dbReference type="PROSITE" id="PS00301">
    <property type="entry name" value="G_TR_1"/>
    <property type="match status" value="1"/>
</dbReference>
<dbReference type="PROSITE" id="PS51722">
    <property type="entry name" value="G_TR_2"/>
    <property type="match status" value="1"/>
</dbReference>
<accession>B6H460</accession>
<comment type="function">
    <text evidence="1">Mitochondrial GTPase that catalyzes the GTP-dependent ribosomal translocation step during translation elongation. During this step, the ribosome changes from the pre-translocational (PRE) to the post-translocational (POST) state as the newly formed A-site-bound peptidyl-tRNA and P-site-bound deacylated tRNA move to the P and E sites, respectively. Catalyzes the coordinated movement of the two tRNA molecules, the mRNA and conformational changes in the ribosome.</text>
</comment>
<comment type="pathway">
    <text evidence="1">Protein biosynthesis; polypeptide chain elongation.</text>
</comment>
<comment type="subcellular location">
    <subcellularLocation>
        <location evidence="1">Mitochondrion</location>
    </subcellularLocation>
</comment>
<comment type="similarity">
    <text evidence="2">Belongs to the TRAFAC class translation factor GTPase superfamily. Classic translation factor GTPase family. EF-G/EF-2 subfamily.</text>
</comment>
<keyword id="KW-0251">Elongation factor</keyword>
<keyword id="KW-0342">GTP-binding</keyword>
<keyword id="KW-0496">Mitochondrion</keyword>
<keyword id="KW-0547">Nucleotide-binding</keyword>
<keyword id="KW-0648">Protein biosynthesis</keyword>
<keyword id="KW-1185">Reference proteome</keyword>
<keyword id="KW-0809">Transit peptide</keyword>
<gene>
    <name type="primary">mef1</name>
    <name type="ORF">Pc13g07720</name>
</gene>
<reference key="1">
    <citation type="journal article" date="2008" name="Nat. Biotechnol.">
        <title>Genome sequencing and analysis of the filamentous fungus Penicillium chrysogenum.</title>
        <authorList>
            <person name="van den Berg M.A."/>
            <person name="Albang R."/>
            <person name="Albermann K."/>
            <person name="Badger J.H."/>
            <person name="Daran J.-M."/>
            <person name="Driessen A.J.M."/>
            <person name="Garcia-Estrada C."/>
            <person name="Fedorova N.D."/>
            <person name="Harris D.M."/>
            <person name="Heijne W.H.M."/>
            <person name="Joardar V.S."/>
            <person name="Kiel J.A.K.W."/>
            <person name="Kovalchuk A."/>
            <person name="Martin J.F."/>
            <person name="Nierman W.C."/>
            <person name="Nijland J.G."/>
            <person name="Pronk J.T."/>
            <person name="Roubos J.A."/>
            <person name="van der Klei I.J."/>
            <person name="van Peij N.N.M.E."/>
            <person name="Veenhuis M."/>
            <person name="von Doehren H."/>
            <person name="Wagner C."/>
            <person name="Wortman J.R."/>
            <person name="Bovenberg R.A.L."/>
        </authorList>
    </citation>
    <scope>NUCLEOTIDE SEQUENCE [LARGE SCALE GENOMIC DNA]</scope>
    <source>
        <strain>ATCC 28089 / DSM 1075 / NRRL 1951 / Wisconsin 54-1255</strain>
    </source>
</reference>
<name>EFGM_PENRW</name>
<protein>
    <recommendedName>
        <fullName evidence="1">Elongation factor G, mitochondrial</fullName>
        <shortName evidence="1">EF-Gmt</shortName>
    </recommendedName>
    <alternativeName>
        <fullName evidence="1">Elongation factor G 1, mitochondrial</fullName>
        <shortName evidence="1">mEF-G 1</shortName>
    </alternativeName>
    <alternativeName>
        <fullName evidence="1">Elongation factor G1</fullName>
    </alternativeName>
</protein>
<organism>
    <name type="scientific">Penicillium rubens (strain ATCC 28089 / DSM 1075 / NRRL 1951 / Wisconsin 54-1255)</name>
    <name type="common">Penicillium chrysogenum</name>
    <dbReference type="NCBI Taxonomy" id="500485"/>
    <lineage>
        <taxon>Eukaryota</taxon>
        <taxon>Fungi</taxon>
        <taxon>Dikarya</taxon>
        <taxon>Ascomycota</taxon>
        <taxon>Pezizomycotina</taxon>
        <taxon>Eurotiomycetes</taxon>
        <taxon>Eurotiomycetidae</taxon>
        <taxon>Eurotiales</taxon>
        <taxon>Aspergillaceae</taxon>
        <taxon>Penicillium</taxon>
        <taxon>Penicillium chrysogenum species complex</taxon>
    </lineage>
</organism>
<evidence type="ECO:0000255" key="1">
    <source>
        <dbReference type="HAMAP-Rule" id="MF_03061"/>
    </source>
</evidence>
<evidence type="ECO:0000305" key="2"/>
<proteinExistence type="inferred from homology"/>
<sequence length="799" mass="88561">MRSPSLARLQTRAVFGLTRSARFQPQTLLRQRCASTAAFRSAAVAPAYQSKLGQWDQRRNASAAASAVLEAAKVNPDGLSQTAIIDNLDPVEAARLDKCRNIGIAAHIDSGKTTCTERVLFYTGRIKAIHEVRGRDSVGAKMDSMDLEREKGITIQSAATFCDWVKKDKEGVEQKYHLNLIDTPGHIDFTIEVERALRVLDGAVMILCAVSGVQSQTITVDRQMRRYNVPRISFVNKMDRMGANPFKAVDQINNKLKMPAAAVQVPIGAEDEFEGVVDLIRMKALYNVGGSGEEIMEKDEIPEKVKAIAEERRTMLIETLADVDDEIAEIFLEELTPSEDQIRAAIRRATIGLKFTPVFMGSALANKSVQPMLDGVIDYLPNPAEVENLALDQKREEASVKLVPYNSLPFVGLAFKLEESNFGQLTYIRVYQGTLRKGANVFNARNSKKVKVPRIVRMHSNDMEEVSEIGAGEICAVFGIECASGDTFTDGTLGYSMSSMFVPEPVVSLSIKPKQSKDGANFSKAMARFQREDPTFRVSYDSESDQTIISGMGELHLDIYVERMRREYRVDCETGQPQVAYRETIGNRVEFDHLLKKQSGGPGEFARVMGYMEPTGALEENKFEQQVIGGSISEKFLYACEKGFNLSCEKGPLIGHKVLGTRMVINDGATHMTDSSEMSFKNATQQAFRKAFAESQPSVLEPLMKTVVTAPTEFQGDVIGLLNKRNATINDTETGVDEFTVHADCSLNGMFGFSSNLRAATQGKGEYTMEFSHYEKAPPHMQKELIAKYVKAQADRHKK</sequence>
<feature type="transit peptide" description="Mitochondrion" evidence="1">
    <location>
        <begin position="1"/>
        <end position="33"/>
    </location>
</feature>
<feature type="chain" id="PRO_0000385578" description="Elongation factor G, mitochondrial">
    <location>
        <begin position="34"/>
        <end position="799"/>
    </location>
</feature>
<feature type="domain" description="tr-type G">
    <location>
        <begin position="97"/>
        <end position="384"/>
    </location>
</feature>
<feature type="binding site" evidence="1">
    <location>
        <begin position="106"/>
        <end position="113"/>
    </location>
    <ligand>
        <name>GTP</name>
        <dbReference type="ChEBI" id="CHEBI:37565"/>
    </ligand>
</feature>
<feature type="binding site" evidence="1">
    <location>
        <begin position="182"/>
        <end position="186"/>
    </location>
    <ligand>
        <name>GTP</name>
        <dbReference type="ChEBI" id="CHEBI:37565"/>
    </ligand>
</feature>
<feature type="binding site" evidence="1">
    <location>
        <begin position="236"/>
        <end position="239"/>
    </location>
    <ligand>
        <name>GTP</name>
        <dbReference type="ChEBI" id="CHEBI:37565"/>
    </ligand>
</feature>